<gene>
    <name type="primary">strap</name>
    <name type="ORF">DDB_G0286457</name>
</gene>
<organism>
    <name type="scientific">Dictyostelium discoideum</name>
    <name type="common">Social amoeba</name>
    <dbReference type="NCBI Taxonomy" id="44689"/>
    <lineage>
        <taxon>Eukaryota</taxon>
        <taxon>Amoebozoa</taxon>
        <taxon>Evosea</taxon>
        <taxon>Eumycetozoa</taxon>
        <taxon>Dictyostelia</taxon>
        <taxon>Dictyosteliales</taxon>
        <taxon>Dictyosteliaceae</taxon>
        <taxon>Dictyostelium</taxon>
    </lineage>
</organism>
<sequence length="293" mass="32099">MRQPLICSGHSRPVSDLSFSNENSDGSFIVSACLDGSPMLRNGENGDWIGTFEGHKGAVWSSRFNSTASQALTASADYTVKLWDTLNGSEILSIEHQSIVKTADFSNNNSRVVTGGSEKILRIFDLERPNDPLLQISGHTNTIKTATWSVHNDDIVLSGGLDEVIRIWDLRSGTQVSLCAKSSITSMEFSKDRRFLVTTAGNEVTFWDAQSFYPLKVYSLPFDVNCASLHPDNSKFIAGGSDFWVHVYDFSTGNEIEVNKGHHGPVNCCRFSPDGASFASGSLDGTIRLWKGM</sequence>
<name>STRAP_DICDI</name>
<feature type="chain" id="PRO_0000371332" description="Serine-threonine kinase receptor-associated protein">
    <location>
        <begin position="1"/>
        <end position="293"/>
    </location>
</feature>
<feature type="repeat" description="WD 1">
    <location>
        <begin position="9"/>
        <end position="53"/>
    </location>
</feature>
<feature type="repeat" description="WD 2">
    <location>
        <begin position="54"/>
        <end position="93"/>
    </location>
</feature>
<feature type="repeat" description="WD 3">
    <location>
        <begin position="95"/>
        <end position="134"/>
    </location>
</feature>
<feature type="repeat" description="WD 4">
    <location>
        <begin position="138"/>
        <end position="178"/>
    </location>
</feature>
<feature type="repeat" description="WD 5">
    <location>
        <begin position="180"/>
        <end position="217"/>
    </location>
</feature>
<feature type="repeat" description="WD 6">
    <location>
        <begin position="219"/>
        <end position="258"/>
    </location>
</feature>
<feature type="repeat" description="WD 7">
    <location>
        <begin position="261"/>
        <end position="293"/>
    </location>
</feature>
<evidence type="ECO:0000250" key="1">
    <source>
        <dbReference type="UniProtKB" id="Q9Y3F4"/>
    </source>
</evidence>
<evidence type="ECO:0000305" key="2"/>
<dbReference type="EMBL" id="AAFI02000085">
    <property type="protein sequence ID" value="EAL64253.1"/>
    <property type="molecule type" value="Genomic_DNA"/>
</dbReference>
<dbReference type="RefSeq" id="XP_637742.1">
    <property type="nucleotide sequence ID" value="XM_632650.1"/>
</dbReference>
<dbReference type="SMR" id="Q54LT8"/>
<dbReference type="FunCoup" id="Q54LT8">
    <property type="interactions" value="448"/>
</dbReference>
<dbReference type="STRING" id="44689.Q54LT8"/>
<dbReference type="PaxDb" id="44689-DDB0233062"/>
<dbReference type="EnsemblProtists" id="EAL64253">
    <property type="protein sequence ID" value="EAL64253"/>
    <property type="gene ID" value="DDB_G0286457"/>
</dbReference>
<dbReference type="GeneID" id="8625608"/>
<dbReference type="KEGG" id="ddi:DDB_G0286457"/>
<dbReference type="dictyBase" id="DDB_G0286457">
    <property type="gene designation" value="strap"/>
</dbReference>
<dbReference type="VEuPathDB" id="AmoebaDB:DDB_G0286457"/>
<dbReference type="eggNOG" id="KOG0278">
    <property type="taxonomic scope" value="Eukaryota"/>
</dbReference>
<dbReference type="HOGENOM" id="CLU_000288_57_6_1"/>
<dbReference type="InParanoid" id="Q54LT8"/>
<dbReference type="OMA" id="DGFYGLW"/>
<dbReference type="PhylomeDB" id="Q54LT8"/>
<dbReference type="PRO" id="PR:Q54LT8"/>
<dbReference type="Proteomes" id="UP000002195">
    <property type="component" value="Chromosome 4"/>
</dbReference>
<dbReference type="GO" id="GO:0032797">
    <property type="term" value="C:SMN complex"/>
    <property type="evidence" value="ECO:0000318"/>
    <property type="project" value="GO_Central"/>
</dbReference>
<dbReference type="GO" id="GO:0003723">
    <property type="term" value="F:RNA binding"/>
    <property type="evidence" value="ECO:0000318"/>
    <property type="project" value="GO_Central"/>
</dbReference>
<dbReference type="GO" id="GO:0030512">
    <property type="term" value="P:negative regulation of transforming growth factor beta receptor signaling pathway"/>
    <property type="evidence" value="ECO:0000250"/>
    <property type="project" value="dictyBase"/>
</dbReference>
<dbReference type="GO" id="GO:0000387">
    <property type="term" value="P:spliceosomal snRNP assembly"/>
    <property type="evidence" value="ECO:0000318"/>
    <property type="project" value="GO_Central"/>
</dbReference>
<dbReference type="CDD" id="cd00200">
    <property type="entry name" value="WD40"/>
    <property type="match status" value="1"/>
</dbReference>
<dbReference type="FunFam" id="2.130.10.10:FF:000133">
    <property type="entry name" value="Serine-threonine kinase receptor-associated protein"/>
    <property type="match status" value="1"/>
</dbReference>
<dbReference type="Gene3D" id="2.130.10.10">
    <property type="entry name" value="YVTN repeat-like/Quinoprotein amine dehydrogenase"/>
    <property type="match status" value="1"/>
</dbReference>
<dbReference type="InterPro" id="IPR020472">
    <property type="entry name" value="G-protein_beta_WD-40_rep"/>
</dbReference>
<dbReference type="InterPro" id="IPR013979">
    <property type="entry name" value="TIF_beta_prop-like"/>
</dbReference>
<dbReference type="InterPro" id="IPR015943">
    <property type="entry name" value="WD40/YVTN_repeat-like_dom_sf"/>
</dbReference>
<dbReference type="InterPro" id="IPR019775">
    <property type="entry name" value="WD40_repeat_CS"/>
</dbReference>
<dbReference type="InterPro" id="IPR036322">
    <property type="entry name" value="WD40_repeat_dom_sf"/>
</dbReference>
<dbReference type="InterPro" id="IPR001680">
    <property type="entry name" value="WD40_rpt"/>
</dbReference>
<dbReference type="PANTHER" id="PTHR19877">
    <property type="entry name" value="EUKARYOTIC TRANSLATION INITIATION FACTOR 3 SUBUNIT I"/>
    <property type="match status" value="1"/>
</dbReference>
<dbReference type="PANTHER" id="PTHR19877:SF13">
    <property type="entry name" value="SERINE-THREONINE KINASE RECEPTOR-ASSOCIATED PROTEIN"/>
    <property type="match status" value="1"/>
</dbReference>
<dbReference type="Pfam" id="PF08662">
    <property type="entry name" value="eIF2A"/>
    <property type="match status" value="1"/>
</dbReference>
<dbReference type="Pfam" id="PF00400">
    <property type="entry name" value="WD40"/>
    <property type="match status" value="4"/>
</dbReference>
<dbReference type="PRINTS" id="PR00320">
    <property type="entry name" value="GPROTEINBRPT"/>
</dbReference>
<dbReference type="SMART" id="SM00320">
    <property type="entry name" value="WD40"/>
    <property type="match status" value="7"/>
</dbReference>
<dbReference type="SUPFAM" id="SSF50978">
    <property type="entry name" value="WD40 repeat-like"/>
    <property type="match status" value="1"/>
</dbReference>
<dbReference type="PROSITE" id="PS00678">
    <property type="entry name" value="WD_REPEATS_1"/>
    <property type="match status" value="2"/>
</dbReference>
<dbReference type="PROSITE" id="PS50082">
    <property type="entry name" value="WD_REPEATS_2"/>
    <property type="match status" value="3"/>
</dbReference>
<dbReference type="PROSITE" id="PS50294">
    <property type="entry name" value="WD_REPEATS_REGION"/>
    <property type="match status" value="1"/>
</dbReference>
<accession>Q54LT8</accession>
<comment type="function">
    <text evidence="1">The SMN complex catalyzes the assembly of small nuclear ribonucleoproteins (snRNPs), the building blocks of the spliceosome, and thereby plays an important role in the splicing of cellular pre-mRNAs. Most spliceosomal snRNPs contain a common set of Sm proteins SNRPB, SNRPD1, SNRPD2, SNRPD3, SNRPE, SNRPF and SNRPG that assemble in a heptameric protein ring on the Sm site of the small nuclear RNA to form the core snRNP (Sm core). In the cytosol, the Sm proteins SNRPD1, SNRPD2, SNRPE, SNRPF and SNRPG are trapped in an inactive 6S pICln-Sm complex by the chaperone CLNS1A that controls the assembly of the core snRNP. To assemble core snRNPs, the SMN complex accepts the trapped 5Sm proteins from CLNS1A forming an intermediate. Binding of snRNA inside 5Sm triggers eviction of the SMN complex, thereby allowing binding of SNRPD3 and SNRPB to complete assembly of the core snRNP. STRAP may play a role in the cellular distribution of the SMN complex (By similarity).</text>
</comment>
<comment type="subunit">
    <text evidence="1">Part of the core SMN complex.</text>
</comment>
<comment type="similarity">
    <text evidence="2">Belongs to the WD repeat STRAP family.</text>
</comment>
<keyword id="KW-0507">mRNA processing</keyword>
<keyword id="KW-0508">mRNA splicing</keyword>
<keyword id="KW-1185">Reference proteome</keyword>
<keyword id="KW-0677">Repeat</keyword>
<keyword id="KW-0853">WD repeat</keyword>
<reference key="1">
    <citation type="journal article" date="2005" name="Nature">
        <title>The genome of the social amoeba Dictyostelium discoideum.</title>
        <authorList>
            <person name="Eichinger L."/>
            <person name="Pachebat J.A."/>
            <person name="Gloeckner G."/>
            <person name="Rajandream M.A."/>
            <person name="Sucgang R."/>
            <person name="Berriman M."/>
            <person name="Song J."/>
            <person name="Olsen R."/>
            <person name="Szafranski K."/>
            <person name="Xu Q."/>
            <person name="Tunggal B."/>
            <person name="Kummerfeld S."/>
            <person name="Madera M."/>
            <person name="Konfortov B.A."/>
            <person name="Rivero F."/>
            <person name="Bankier A.T."/>
            <person name="Lehmann R."/>
            <person name="Hamlin N."/>
            <person name="Davies R."/>
            <person name="Gaudet P."/>
            <person name="Fey P."/>
            <person name="Pilcher K."/>
            <person name="Chen G."/>
            <person name="Saunders D."/>
            <person name="Sodergren E.J."/>
            <person name="Davis P."/>
            <person name="Kerhornou A."/>
            <person name="Nie X."/>
            <person name="Hall N."/>
            <person name="Anjard C."/>
            <person name="Hemphill L."/>
            <person name="Bason N."/>
            <person name="Farbrother P."/>
            <person name="Desany B."/>
            <person name="Just E."/>
            <person name="Morio T."/>
            <person name="Rost R."/>
            <person name="Churcher C.M."/>
            <person name="Cooper J."/>
            <person name="Haydock S."/>
            <person name="van Driessche N."/>
            <person name="Cronin A."/>
            <person name="Goodhead I."/>
            <person name="Muzny D.M."/>
            <person name="Mourier T."/>
            <person name="Pain A."/>
            <person name="Lu M."/>
            <person name="Harper D."/>
            <person name="Lindsay R."/>
            <person name="Hauser H."/>
            <person name="James K.D."/>
            <person name="Quiles M."/>
            <person name="Madan Babu M."/>
            <person name="Saito T."/>
            <person name="Buchrieser C."/>
            <person name="Wardroper A."/>
            <person name="Felder M."/>
            <person name="Thangavelu M."/>
            <person name="Johnson D."/>
            <person name="Knights A."/>
            <person name="Loulseged H."/>
            <person name="Mungall K.L."/>
            <person name="Oliver K."/>
            <person name="Price C."/>
            <person name="Quail M.A."/>
            <person name="Urushihara H."/>
            <person name="Hernandez J."/>
            <person name="Rabbinowitsch E."/>
            <person name="Steffen D."/>
            <person name="Sanders M."/>
            <person name="Ma J."/>
            <person name="Kohara Y."/>
            <person name="Sharp S."/>
            <person name="Simmonds M.N."/>
            <person name="Spiegler S."/>
            <person name="Tivey A."/>
            <person name="Sugano S."/>
            <person name="White B."/>
            <person name="Walker D."/>
            <person name="Woodward J.R."/>
            <person name="Winckler T."/>
            <person name="Tanaka Y."/>
            <person name="Shaulsky G."/>
            <person name="Schleicher M."/>
            <person name="Weinstock G.M."/>
            <person name="Rosenthal A."/>
            <person name="Cox E.C."/>
            <person name="Chisholm R.L."/>
            <person name="Gibbs R.A."/>
            <person name="Loomis W.F."/>
            <person name="Platzer M."/>
            <person name="Kay R.R."/>
            <person name="Williams J.G."/>
            <person name="Dear P.H."/>
            <person name="Noegel A.A."/>
            <person name="Barrell B.G."/>
            <person name="Kuspa A."/>
        </authorList>
    </citation>
    <scope>NUCLEOTIDE SEQUENCE [LARGE SCALE GENOMIC DNA]</scope>
    <source>
        <strain>AX4</strain>
    </source>
</reference>
<protein>
    <recommendedName>
        <fullName>Serine-threonine kinase receptor-associated protein</fullName>
    </recommendedName>
    <alternativeName>
        <fullName>WD40 repeat-containing protein strap</fullName>
    </alternativeName>
</protein>
<proteinExistence type="inferred from homology"/>